<name>RPIA_BURO1</name>
<comment type="function">
    <text evidence="1">Catalyzes the reversible conversion of ribose-5-phosphate to ribulose 5-phosphate.</text>
</comment>
<comment type="catalytic activity">
    <reaction evidence="1">
        <text>aldehydo-D-ribose 5-phosphate = D-ribulose 5-phosphate</text>
        <dbReference type="Rhea" id="RHEA:14657"/>
        <dbReference type="ChEBI" id="CHEBI:58121"/>
        <dbReference type="ChEBI" id="CHEBI:58273"/>
        <dbReference type="EC" id="5.3.1.6"/>
    </reaction>
</comment>
<comment type="pathway">
    <text evidence="1">Carbohydrate degradation; pentose phosphate pathway; D-ribose 5-phosphate from D-ribulose 5-phosphate (non-oxidative stage): step 1/1.</text>
</comment>
<comment type="subunit">
    <text evidence="1">Homodimer.</text>
</comment>
<comment type="similarity">
    <text evidence="1">Belongs to the ribose 5-phosphate isomerase family.</text>
</comment>
<accession>Q1BWM9</accession>
<dbReference type="EC" id="5.3.1.6" evidence="1"/>
<dbReference type="EMBL" id="CP000378">
    <property type="protein sequence ID" value="ABF75976.1"/>
    <property type="molecule type" value="Genomic_DNA"/>
</dbReference>
<dbReference type="SMR" id="Q1BWM9"/>
<dbReference type="HOGENOM" id="CLU_056590_1_1_4"/>
<dbReference type="UniPathway" id="UPA00115">
    <property type="reaction ID" value="UER00412"/>
</dbReference>
<dbReference type="GO" id="GO:0005829">
    <property type="term" value="C:cytosol"/>
    <property type="evidence" value="ECO:0007669"/>
    <property type="project" value="TreeGrafter"/>
</dbReference>
<dbReference type="GO" id="GO:0004751">
    <property type="term" value="F:ribose-5-phosphate isomerase activity"/>
    <property type="evidence" value="ECO:0007669"/>
    <property type="project" value="UniProtKB-UniRule"/>
</dbReference>
<dbReference type="GO" id="GO:0006014">
    <property type="term" value="P:D-ribose metabolic process"/>
    <property type="evidence" value="ECO:0007669"/>
    <property type="project" value="TreeGrafter"/>
</dbReference>
<dbReference type="GO" id="GO:0009052">
    <property type="term" value="P:pentose-phosphate shunt, non-oxidative branch"/>
    <property type="evidence" value="ECO:0007669"/>
    <property type="project" value="UniProtKB-UniRule"/>
</dbReference>
<dbReference type="CDD" id="cd01398">
    <property type="entry name" value="RPI_A"/>
    <property type="match status" value="1"/>
</dbReference>
<dbReference type="FunFam" id="3.40.50.1360:FF:000001">
    <property type="entry name" value="Ribose-5-phosphate isomerase A"/>
    <property type="match status" value="1"/>
</dbReference>
<dbReference type="Gene3D" id="3.30.70.260">
    <property type="match status" value="1"/>
</dbReference>
<dbReference type="Gene3D" id="3.40.50.1360">
    <property type="match status" value="1"/>
</dbReference>
<dbReference type="HAMAP" id="MF_00170">
    <property type="entry name" value="Rib_5P_isom_A"/>
    <property type="match status" value="1"/>
</dbReference>
<dbReference type="InterPro" id="IPR037171">
    <property type="entry name" value="NagB/RpiA_transferase-like"/>
</dbReference>
<dbReference type="InterPro" id="IPR020672">
    <property type="entry name" value="Ribose5P_isomerase_typA_subgr"/>
</dbReference>
<dbReference type="InterPro" id="IPR004788">
    <property type="entry name" value="Ribose5P_isomerase_type_A"/>
</dbReference>
<dbReference type="NCBIfam" id="NF001924">
    <property type="entry name" value="PRK00702.1"/>
    <property type="match status" value="1"/>
</dbReference>
<dbReference type="NCBIfam" id="TIGR00021">
    <property type="entry name" value="rpiA"/>
    <property type="match status" value="1"/>
</dbReference>
<dbReference type="PANTHER" id="PTHR11934">
    <property type="entry name" value="RIBOSE-5-PHOSPHATE ISOMERASE"/>
    <property type="match status" value="1"/>
</dbReference>
<dbReference type="PANTHER" id="PTHR11934:SF0">
    <property type="entry name" value="RIBOSE-5-PHOSPHATE ISOMERASE"/>
    <property type="match status" value="1"/>
</dbReference>
<dbReference type="Pfam" id="PF06026">
    <property type="entry name" value="Rib_5-P_isom_A"/>
    <property type="match status" value="1"/>
</dbReference>
<dbReference type="SUPFAM" id="SSF75445">
    <property type="entry name" value="D-ribose-5-phosphate isomerase (RpiA), lid domain"/>
    <property type="match status" value="1"/>
</dbReference>
<dbReference type="SUPFAM" id="SSF100950">
    <property type="entry name" value="NagB/RpiA/CoA transferase-like"/>
    <property type="match status" value="1"/>
</dbReference>
<reference key="1">
    <citation type="submission" date="2006-05" db="EMBL/GenBank/DDBJ databases">
        <title>Complete sequence of chromosome 1 of Burkholderia cenocepacia AU 1054.</title>
        <authorList>
            <consortium name="US DOE Joint Genome Institute"/>
            <person name="Copeland A."/>
            <person name="Lucas S."/>
            <person name="Lapidus A."/>
            <person name="Barry K."/>
            <person name="Detter J.C."/>
            <person name="Glavina del Rio T."/>
            <person name="Hammon N."/>
            <person name="Israni S."/>
            <person name="Dalin E."/>
            <person name="Tice H."/>
            <person name="Pitluck S."/>
            <person name="Chain P."/>
            <person name="Malfatti S."/>
            <person name="Shin M."/>
            <person name="Vergez L."/>
            <person name="Schmutz J."/>
            <person name="Larimer F."/>
            <person name="Land M."/>
            <person name="Hauser L."/>
            <person name="Kyrpides N."/>
            <person name="Lykidis A."/>
            <person name="LiPuma J.J."/>
            <person name="Konstantinidis K."/>
            <person name="Tiedje J.M."/>
            <person name="Richardson P."/>
        </authorList>
    </citation>
    <scope>NUCLEOTIDE SEQUENCE [LARGE SCALE GENOMIC DNA]</scope>
    <source>
        <strain>AU 1054</strain>
    </source>
</reference>
<gene>
    <name evidence="1" type="primary">rpiA</name>
    <name type="ordered locus">Bcen_1069</name>
</gene>
<feature type="chain" id="PRO_1000016906" description="Ribose-5-phosphate isomerase A">
    <location>
        <begin position="1"/>
        <end position="231"/>
    </location>
</feature>
<feature type="active site" description="Proton acceptor" evidence="1">
    <location>
        <position position="107"/>
    </location>
</feature>
<feature type="binding site" evidence="1">
    <location>
        <begin position="32"/>
        <end position="35"/>
    </location>
    <ligand>
        <name>substrate</name>
    </ligand>
</feature>
<feature type="binding site" evidence="1">
    <location>
        <begin position="85"/>
        <end position="88"/>
    </location>
    <ligand>
        <name>substrate</name>
    </ligand>
</feature>
<feature type="binding site" evidence="1">
    <location>
        <begin position="98"/>
        <end position="101"/>
    </location>
    <ligand>
        <name>substrate</name>
    </ligand>
</feature>
<feature type="binding site" evidence="1">
    <location>
        <position position="125"/>
    </location>
    <ligand>
        <name>substrate</name>
    </ligand>
</feature>
<evidence type="ECO:0000255" key="1">
    <source>
        <dbReference type="HAMAP-Rule" id="MF_00170"/>
    </source>
</evidence>
<proteinExistence type="inferred from homology"/>
<sequence>MTQDELKRLVGQAAADYVIQNVPEGAVIGVGTGSTANCFIDALAAVKSRYRGAVSSSIATTERLKSHGIKVFDLNEIESLQVYVDGADEIDAGGAMIKGGGGALTREKIVASVADTFVCIADASKRVPVLGAFPLPIEVVPMARTAIGRRVTALGGVPVLRVTKDGAPYITDNGNEIIDVKGLQIADPRGFEAQVNAWPGVVTVGLFAERGANLCLLGTENGVETIVYPAG</sequence>
<keyword id="KW-0413">Isomerase</keyword>
<protein>
    <recommendedName>
        <fullName evidence="1">Ribose-5-phosphate isomerase A</fullName>
        <ecNumber evidence="1">5.3.1.6</ecNumber>
    </recommendedName>
    <alternativeName>
        <fullName evidence="1">Phosphoriboisomerase A</fullName>
        <shortName evidence="1">PRI</shortName>
    </alternativeName>
</protein>
<organism>
    <name type="scientific">Burkholderia orbicola (strain AU 1054)</name>
    <dbReference type="NCBI Taxonomy" id="331271"/>
    <lineage>
        <taxon>Bacteria</taxon>
        <taxon>Pseudomonadati</taxon>
        <taxon>Pseudomonadota</taxon>
        <taxon>Betaproteobacteria</taxon>
        <taxon>Burkholderiales</taxon>
        <taxon>Burkholderiaceae</taxon>
        <taxon>Burkholderia</taxon>
        <taxon>Burkholderia cepacia complex</taxon>
        <taxon>Burkholderia orbicola</taxon>
    </lineage>
</organism>